<proteinExistence type="inferred from homology"/>
<sequence length="332" mass="35777">MVQFSSIVQCTLLATAASAYVTSRQAAESLHDAFTAAGKKYFGNIAEQALLENPQNEPIIAADFGALTCENSMKWDATEPTQGGYNFDGADYVVNYAVEKGKLLRGHTLLWHSQLPSWVSQISDPATLTGVIQDHVTTLVSRWKGQIYAWDVVNEIFAEDGSLRESVFSNVLGEDFVRIAFEAARAADPDCKLYINDYNLDDASYSKTQGFVSKVGEWIAAGVPIDGIGMWLACLFKHAYAGGFPTSGAQAALEALASTGASEVAVTELDIGGATSDDWVNVVNACLNVEKCIGITVWGVSDKDSWRADESPLLFDVNYQPKDAYGAIIAAL</sequence>
<gene>
    <name type="primary">xynF1</name>
    <name type="synonym">xlnF1</name>
    <name type="ORF">AFLA_063510</name>
</gene>
<protein>
    <recommendedName>
        <fullName>Probable endo-1,4-beta-xylanase F1</fullName>
        <shortName>Xylanase F1</shortName>
        <ecNumber>3.2.1.8</ecNumber>
    </recommendedName>
    <alternativeName>
        <fullName>1,4-beta-D-xylan xylanohydrolase F1</fullName>
    </alternativeName>
</protein>
<evidence type="ECO:0000250" key="1"/>
<evidence type="ECO:0000255" key="2"/>
<evidence type="ECO:0000255" key="3">
    <source>
        <dbReference type="PROSITE-ProRule" id="PRU01096"/>
    </source>
</evidence>
<evidence type="ECO:0000255" key="4">
    <source>
        <dbReference type="PROSITE-ProRule" id="PRU10061"/>
    </source>
</evidence>
<evidence type="ECO:0000305" key="5"/>
<feature type="signal peptide" evidence="2">
    <location>
        <begin position="1"/>
        <end position="19"/>
    </location>
</feature>
<feature type="chain" id="PRO_0000393186" description="Probable endo-1,4-beta-xylanase F1">
    <location>
        <begin position="20"/>
        <end position="332"/>
    </location>
</feature>
<feature type="domain" description="GH10" evidence="3">
    <location>
        <begin position="45"/>
        <end position="331"/>
    </location>
</feature>
<feature type="active site" description="Proton donor" evidence="1">
    <location>
        <position position="155"/>
    </location>
</feature>
<feature type="active site" description="Nucleophile" evidence="4">
    <location>
        <position position="268"/>
    </location>
</feature>
<feature type="disulfide bond" evidence="1">
    <location>
        <begin position="286"/>
        <end position="292"/>
    </location>
</feature>
<reference key="1">
    <citation type="journal article" date="2015" name="Genome Announc.">
        <title>Genome sequence of Aspergillus flavus NRRL 3357, a strain that causes aflatoxin contamination of food and feed.</title>
        <authorList>
            <person name="Nierman W.C."/>
            <person name="Yu J."/>
            <person name="Fedorova-Abrams N.D."/>
            <person name="Losada L."/>
            <person name="Cleveland T.E."/>
            <person name="Bhatnagar D."/>
            <person name="Bennett J.W."/>
            <person name="Dean R."/>
            <person name="Payne G.A."/>
        </authorList>
    </citation>
    <scope>NUCLEOTIDE SEQUENCE [LARGE SCALE GENOMIC DNA]</scope>
    <source>
        <strain>ATCC 200026 / FGSC A1120 / IAM 13836 / NRRL 3357 / JCM 12722 / SRRC 167</strain>
    </source>
</reference>
<comment type="function">
    <text evidence="1">Endo-1,4-beta-xylanase involved in the hydrolysis of xylan, a major structural heterogeneous polysaccharide found in plant biomass representing the second most abundant polysaccharide in the biosphere, after cellulose.</text>
</comment>
<comment type="catalytic activity">
    <reaction>
        <text>Endohydrolysis of (1-&gt;4)-beta-D-xylosidic linkages in xylans.</text>
        <dbReference type="EC" id="3.2.1.8"/>
    </reaction>
</comment>
<comment type="pathway">
    <text>Glycan degradation; xylan degradation.</text>
</comment>
<comment type="subcellular location">
    <subcellularLocation>
        <location evidence="1">Secreted</location>
    </subcellularLocation>
</comment>
<comment type="similarity">
    <text evidence="5">Belongs to the glycosyl hydrolase 10 (cellulase F) family.</text>
</comment>
<keyword id="KW-0119">Carbohydrate metabolism</keyword>
<keyword id="KW-1015">Disulfide bond</keyword>
<keyword id="KW-0326">Glycosidase</keyword>
<keyword id="KW-0378">Hydrolase</keyword>
<keyword id="KW-0624">Polysaccharide degradation</keyword>
<keyword id="KW-0964">Secreted</keyword>
<keyword id="KW-0732">Signal</keyword>
<keyword id="KW-0858">Xylan degradation</keyword>
<name>XYNF1_ASPFN</name>
<accession>B8NER4</accession>
<organism>
    <name type="scientific">Aspergillus flavus (strain ATCC 200026 / FGSC A1120 / IAM 13836 / NRRL 3357 / JCM 12722 / SRRC 167)</name>
    <dbReference type="NCBI Taxonomy" id="332952"/>
    <lineage>
        <taxon>Eukaryota</taxon>
        <taxon>Fungi</taxon>
        <taxon>Dikarya</taxon>
        <taxon>Ascomycota</taxon>
        <taxon>Pezizomycotina</taxon>
        <taxon>Eurotiomycetes</taxon>
        <taxon>Eurotiomycetidae</taxon>
        <taxon>Eurotiales</taxon>
        <taxon>Aspergillaceae</taxon>
        <taxon>Aspergillus</taxon>
        <taxon>Aspergillus subgen. Circumdati</taxon>
    </lineage>
</organism>
<dbReference type="EC" id="3.2.1.8"/>
<dbReference type="EMBL" id="EQ963477">
    <property type="protein sequence ID" value="EED52088.1"/>
    <property type="molecule type" value="Genomic_DNA"/>
</dbReference>
<dbReference type="RefSeq" id="XP_002379095.1">
    <property type="nucleotide sequence ID" value="XM_002379054.1"/>
</dbReference>
<dbReference type="SMR" id="B8NER4"/>
<dbReference type="STRING" id="332952.B8NER4"/>
<dbReference type="EnsemblFungi" id="EED52088">
    <property type="protein sequence ID" value="EED52088"/>
    <property type="gene ID" value="AFLA_063510"/>
</dbReference>
<dbReference type="VEuPathDB" id="FungiDB:AFLA_005410"/>
<dbReference type="eggNOG" id="ENOG502QSCW">
    <property type="taxonomic scope" value="Eukaryota"/>
</dbReference>
<dbReference type="HOGENOM" id="CLU_020161_2_0_1"/>
<dbReference type="OMA" id="QINDRAT"/>
<dbReference type="UniPathway" id="UPA00114"/>
<dbReference type="GO" id="GO:0005576">
    <property type="term" value="C:extracellular region"/>
    <property type="evidence" value="ECO:0000250"/>
    <property type="project" value="UniProtKB"/>
</dbReference>
<dbReference type="GO" id="GO:0031176">
    <property type="term" value="F:endo-1,4-beta-xylanase activity"/>
    <property type="evidence" value="ECO:0000250"/>
    <property type="project" value="UniProtKB"/>
</dbReference>
<dbReference type="GO" id="GO:0045493">
    <property type="term" value="P:xylan catabolic process"/>
    <property type="evidence" value="ECO:0000250"/>
    <property type="project" value="UniProtKB"/>
</dbReference>
<dbReference type="FunFam" id="3.20.20.80:FF:000094">
    <property type="entry name" value="Endo-1,4-beta-xylanase"/>
    <property type="match status" value="1"/>
</dbReference>
<dbReference type="Gene3D" id="3.20.20.80">
    <property type="entry name" value="Glycosidases"/>
    <property type="match status" value="1"/>
</dbReference>
<dbReference type="InterPro" id="IPR044846">
    <property type="entry name" value="GH10"/>
</dbReference>
<dbReference type="InterPro" id="IPR031158">
    <property type="entry name" value="GH10_AS"/>
</dbReference>
<dbReference type="InterPro" id="IPR001000">
    <property type="entry name" value="GH10_dom"/>
</dbReference>
<dbReference type="InterPro" id="IPR017853">
    <property type="entry name" value="Glycoside_hydrolase_SF"/>
</dbReference>
<dbReference type="PANTHER" id="PTHR31490:SF76">
    <property type="entry name" value="ENDO-1,4-BETA-XYLANASE C"/>
    <property type="match status" value="1"/>
</dbReference>
<dbReference type="PANTHER" id="PTHR31490">
    <property type="entry name" value="GLYCOSYL HYDROLASE"/>
    <property type="match status" value="1"/>
</dbReference>
<dbReference type="Pfam" id="PF00331">
    <property type="entry name" value="Glyco_hydro_10"/>
    <property type="match status" value="1"/>
</dbReference>
<dbReference type="PRINTS" id="PR00134">
    <property type="entry name" value="GLHYDRLASE10"/>
</dbReference>
<dbReference type="SMART" id="SM00633">
    <property type="entry name" value="Glyco_10"/>
    <property type="match status" value="1"/>
</dbReference>
<dbReference type="SUPFAM" id="SSF51445">
    <property type="entry name" value="(Trans)glycosidases"/>
    <property type="match status" value="1"/>
</dbReference>
<dbReference type="PROSITE" id="PS00591">
    <property type="entry name" value="GH10_1"/>
    <property type="match status" value="1"/>
</dbReference>
<dbReference type="PROSITE" id="PS51760">
    <property type="entry name" value="GH10_2"/>
    <property type="match status" value="1"/>
</dbReference>